<proteinExistence type="inferred from homology"/>
<feature type="signal peptide" evidence="2">
    <location>
        <begin position="1"/>
        <end position="22"/>
    </location>
</feature>
<feature type="chain" id="PRO_0000239511" description="Envelope glycoprotein gp160">
    <location>
        <begin position="23"/>
        <end position="882"/>
    </location>
</feature>
<feature type="chain" id="PRO_0000038464" description="Surface protein gp120" evidence="1">
    <location>
        <begin position="23"/>
        <end position="528"/>
    </location>
</feature>
<feature type="chain" id="PRO_0000038465" description="Transmembrane protein gp41" evidence="1">
    <location>
        <begin position="529"/>
        <end position="882"/>
    </location>
</feature>
<feature type="topological domain" description="Extracellular" evidence="2">
    <location>
        <begin position="23"/>
        <end position="697"/>
    </location>
</feature>
<feature type="transmembrane region" description="Helical" evidence="2">
    <location>
        <begin position="698"/>
        <end position="718"/>
    </location>
</feature>
<feature type="topological domain" description="Cytoplasmic" evidence="2">
    <location>
        <begin position="719"/>
        <end position="882"/>
    </location>
</feature>
<feature type="region of interest" description="V1">
    <location>
        <begin position="113"/>
        <end position="170"/>
    </location>
</feature>
<feature type="region of interest" description="V2">
    <location>
        <begin position="171"/>
        <end position="214"/>
    </location>
</feature>
<feature type="region of interest" description="V3">
    <location>
        <begin position="314"/>
        <end position="346"/>
    </location>
</feature>
<feature type="region of interest" description="V4">
    <location>
        <begin position="405"/>
        <end position="435"/>
    </location>
</feature>
<feature type="region of interest" description="V5">
    <location>
        <begin position="478"/>
        <end position="485"/>
    </location>
</feature>
<feature type="region of interest" description="Fusion peptide" evidence="2">
    <location>
        <begin position="529"/>
        <end position="549"/>
    </location>
</feature>
<feature type="region of interest" description="Immunosuppression" evidence="1">
    <location>
        <begin position="592"/>
        <end position="608"/>
    </location>
</feature>
<feature type="region of interest" description="MPER; binding to GalCer" evidence="1">
    <location>
        <begin position="674"/>
        <end position="695"/>
    </location>
</feature>
<feature type="region of interest" description="Disordered" evidence="3">
    <location>
        <begin position="738"/>
        <end position="761"/>
    </location>
</feature>
<feature type="coiled-coil region" evidence="2">
    <location>
        <begin position="637"/>
        <end position="669"/>
    </location>
</feature>
<feature type="short sequence motif" description="YXXV motif; contains endocytosis signal" evidence="1">
    <location>
        <begin position="724"/>
        <end position="727"/>
    </location>
</feature>
<feature type="short sequence motif" description="Di-leucine internalization motif" evidence="1">
    <location>
        <begin position="881"/>
        <end position="882"/>
    </location>
</feature>
<feature type="site" description="Cleavage; by host furin" evidence="2">
    <location>
        <begin position="528"/>
        <end position="529"/>
    </location>
</feature>
<feature type="site" description="In-frame UAG termination codon">
    <location>
        <position position="737"/>
    </location>
</feature>
<feature type="lipid moiety-binding region" description="S-palmitoyl cysteine; by host" evidence="1">
    <location>
        <position position="790"/>
    </location>
</feature>
<feature type="glycosylation site" description="N-linked (GlcNAc...) asparagine; by host" evidence="2">
    <location>
        <position position="37"/>
    </location>
</feature>
<feature type="glycosylation site" description="N-linked (GlcNAc...) asparagine; by host" evidence="2">
    <location>
        <position position="70"/>
    </location>
</feature>
<feature type="glycosylation site" description="N-linked (GlcNAc...) asparagine; by host" evidence="2">
    <location>
        <position position="114"/>
    </location>
</feature>
<feature type="glycosylation site" description="N-linked (GlcNAc...) asparagine; by host" evidence="2">
    <location>
        <position position="149"/>
    </location>
</feature>
<feature type="glycosylation site" description="N-linked (GlcNAc...) asparagine; by host" evidence="2">
    <location>
        <position position="159"/>
    </location>
</feature>
<feature type="glycosylation site" description="N-linked (GlcNAc...) asparagine; by host" evidence="2">
    <location>
        <position position="174"/>
    </location>
</feature>
<feature type="glycosylation site" description="N-linked (GlcNAc...) asparagine; by host" evidence="2">
    <location>
        <position position="187"/>
    </location>
</feature>
<feature type="glycosylation site" description="N-linked (GlcNAc...) asparagine; by host" evidence="2">
    <location>
        <position position="201"/>
    </location>
</feature>
<feature type="glycosylation site" description="N-linked (GlcNAc...) asparagine; by host" evidence="2">
    <location>
        <position position="205"/>
    </location>
</feature>
<feature type="glycosylation site" description="N-linked (GlcNAc...) asparagine; by host" evidence="2">
    <location>
        <position position="215"/>
    </location>
</feature>
<feature type="glycosylation site" description="N-linked (GlcNAc...) asparagine; by host" evidence="2">
    <location>
        <position position="247"/>
    </location>
</feature>
<feature type="glycosylation site" description="N-linked (GlcNAc...) asparagine; by host" evidence="2">
    <location>
        <position position="250"/>
    </location>
</feature>
<feature type="glycosylation site" description="N-linked (GlcNAc...) asparagine; by host" evidence="2">
    <location>
        <position position="257"/>
    </location>
</feature>
<feature type="glycosylation site" description="N-linked (GlcNAc...) asparagine; by host" evidence="2">
    <location>
        <position position="281"/>
    </location>
</feature>
<feature type="glycosylation site" description="N-linked (GlcNAc...) asparagine; by host" evidence="2">
    <location>
        <position position="287"/>
    </location>
</feature>
<feature type="glycosylation site" description="N-linked (GlcNAc...) asparagine; by host" evidence="2">
    <location>
        <position position="298"/>
    </location>
</feature>
<feature type="glycosylation site" description="N-linked (GlcNAc...) asparagine; by host" evidence="2">
    <location>
        <position position="309"/>
    </location>
</feature>
<feature type="glycosylation site" description="N-linked (GlcNAc...) asparagine; by host" evidence="2">
    <location>
        <position position="319"/>
    </location>
</feature>
<feature type="glycosylation site" description="N-linked (GlcNAc...) asparagine; by host" evidence="2">
    <location>
        <position position="374"/>
    </location>
</feature>
<feature type="glycosylation site" description="N-linked (GlcNAc...) asparagine; by host" evidence="2">
    <location>
        <position position="380"/>
    </location>
</feature>
<feature type="glycosylation site" description="N-linked (GlcNAc...) asparagine; by host" evidence="2">
    <location>
        <position position="463"/>
    </location>
</feature>
<feature type="glycosylation site" description="N-linked (GlcNAc...) asparagine; by host" evidence="2">
    <location>
        <position position="474"/>
    </location>
</feature>
<feature type="glycosylation site" description="N-linked (GlcNAc...) asparagine; by host" evidence="2">
    <location>
        <position position="479"/>
    </location>
</feature>
<feature type="glycosylation site" description="N-linked (GlcNAc...) asparagine; by host" evidence="2">
    <location>
        <position position="628"/>
    </location>
</feature>
<feature type="glycosylation site" description="N-linked (GlcNAc...) asparagine; by host" evidence="2">
    <location>
        <position position="637"/>
    </location>
</feature>
<feature type="glycosylation site" description="N-linked (GlcNAc...) asparagine; by host" evidence="2">
    <location>
        <position position="653"/>
    </location>
</feature>
<feature type="disulfide bond" evidence="1">
    <location>
        <begin position="44"/>
        <end position="57"/>
    </location>
</feature>
<feature type="disulfide bond" evidence="1">
    <location>
        <begin position="101"/>
        <end position="223"/>
    </location>
</feature>
<feature type="disulfide bond" evidence="1">
    <location>
        <begin position="108"/>
        <end position="214"/>
    </location>
</feature>
<feature type="disulfide bond" evidence="1">
    <location>
        <begin position="113"/>
        <end position="171"/>
    </location>
</feature>
<feature type="disulfide bond" evidence="1">
    <location>
        <begin position="236"/>
        <end position="266"/>
    </location>
</feature>
<feature type="disulfide bond" evidence="1">
    <location>
        <begin position="246"/>
        <end position="258"/>
    </location>
</feature>
<feature type="disulfide bond" evidence="1">
    <location>
        <begin position="314"/>
        <end position="347"/>
    </location>
</feature>
<feature type="disulfide bond" evidence="1">
    <location>
        <begin position="398"/>
        <end position="462"/>
    </location>
</feature>
<feature type="disulfide bond" evidence="1">
    <location>
        <begin position="405"/>
        <end position="435"/>
    </location>
</feature>
<protein>
    <recommendedName>
        <fullName>Envelope glycoprotein gp160</fullName>
    </recommendedName>
    <alternativeName>
        <fullName>Env polyprotein</fullName>
    </alternativeName>
    <component>
        <recommendedName>
            <fullName>Surface protein gp120</fullName>
            <shortName>SU</shortName>
        </recommendedName>
        <alternativeName>
            <fullName>Glycoprotein 120</fullName>
            <shortName>gp120</shortName>
        </alternativeName>
    </component>
    <component>
        <recommendedName>
            <fullName>Transmembrane protein gp41</fullName>
            <shortName>TM</shortName>
        </recommendedName>
        <alternativeName>
            <fullName>Glycoprotein 32</fullName>
            <shortName>gp32</shortName>
        </alternativeName>
    </component>
</protein>
<accession>P05885</accession>
<accession>Q85725</accession>
<accession>Q85726</accession>
<organism>
    <name type="scientific">Simian immunodeficiency virus (isolate Mm142-83)</name>
    <name type="common">SIV-mac</name>
    <name type="synonym">Simian immunodeficiency virus rhesus monkey</name>
    <dbReference type="NCBI Taxonomy" id="11733"/>
    <lineage>
        <taxon>Viruses</taxon>
        <taxon>Riboviria</taxon>
        <taxon>Pararnavirae</taxon>
        <taxon>Artverviricota</taxon>
        <taxon>Revtraviricetes</taxon>
        <taxon>Ortervirales</taxon>
        <taxon>Retroviridae</taxon>
        <taxon>Orthoretrovirinae</taxon>
        <taxon>Lentivirus</taxon>
        <taxon>Simian immunodeficiency virus</taxon>
    </lineage>
</organism>
<organismHost>
    <name type="scientific">Cercopithecidae</name>
    <name type="common">Old World monkeys</name>
    <dbReference type="NCBI Taxonomy" id="9527"/>
</organismHost>
<comment type="function">
    <text evidence="1">The surface protein gp120 (SU) attaches the virus to the host lymphoid cell by binding to the primary receptor CD4. This interaction induces a structural rearrangement creating a high affinity binding site for a chemokine coreceptor like CCR5. This peculiar 2 stage receptor-interaction strategy allows gp120 to maintain the highly conserved coreceptor-binding site in a cryptic conformation, protected from neutralizing antibodies. These changes are transmitted to the transmembrane protein gp41 and are thought to activate its fusogenic potential by unmasking its fusion peptide (By similarity).</text>
</comment>
<comment type="function">
    <text evidence="1">Surface protein gp120 (SU) may target the virus to gut-associated lymphoid tissue (GALT) by binding host ITGA4/ITGB7 (alpha-4/beta-7 integrins), a complex that mediates T-cell migration to the GALT. Interaction between gp120 and ITGA4/ITGB7 would allow the virus to enter GALT early in the infection, infecting and killing most of GALT's resting CD4+ T-cells. This T-cell depletion is believed to be the major insult to the host immune system leading to AIDS (By similarity).</text>
</comment>
<comment type="function">
    <text evidence="1">The surface protein gp120 is a ligand for CD209/DC-SIGN and CLEC4M/DC-SIGNR, which are respectively found on dendritic cells (DCs), and on endothelial cells of liver sinusoids and lymph node sinuses. These interactions allow capture of viral particles at mucosal surfaces by these cells and subsequent transmission to permissive cells. DCs are professional antigen presenting cells, critical for host immunity by inducing specific immune responses against a broad variety of pathogens. They act as sentinels in various tissues where they take up antigen, process it, and present it to T-cells following migration to lymphoid organs. SIV subverts the migration properties of dendritic cells to gain access to CD4+ T-cells in lymph nodes. Virus transmission to permissive T-cells occurs either in trans (without DCs infection, through viral capture and transmission), or in cis (following DCs productive infection, through the usual CD4-gp120 interaction), thereby inducing a robust infection. In trans infection, bound virions remain infectious over days and it is proposed that they are not degraded, but protected in non-lysosomal acidic organelles within the DCs close to the cell membrane thus contributing to the viral infectious potential during DCs' migration from the periphery to the lymphoid tissues. On arrival at lymphoid tissues, intact virions recycle back to DCs' cell surface allowing virus transmission to CD4+ T-cells. Virion capture also seems to lead to MHC-II-restricted viral antigen presentation, and probably to the activation of SIV-specific CD4+ cells (By similarity).</text>
</comment>
<comment type="function">
    <text evidence="1">The transmembrane protein gp41 (TM) acts as a class I viral fusion protein. Under the current model, the protein has at least 3 conformational states: pre-fusion native state, pre-hairpin intermediate state, and post-fusion hairpin state. During fusion of viral and target intracellular membranes, the coiled coil regions (heptad repeats) assume a trimer-of-hairpins structure, positioning the fusion peptide in close proximity to the C-terminal region of the ectodomain. The formation of this structure appears to drive apposition and subsequent fusion of viral and target cell membranes. Complete fusion occurs in host cell endosomes. The virus undergoes clathrin-dependent internalization long before endosomal fusion, thus minimizing the surface exposure of conserved viral epitopes during fusion and reducing the efficacy of inhibitors targeting these epitopes. Membranes fusion leads to delivery of the nucleocapsid into the cytoplasm (By similarity).</text>
</comment>
<comment type="function">
    <text evidence="1">The envelope glycoprotein gp160 precursor down-modulates cell surface CD4 antigen by interacting with it in the endoplasmic reticulum and blocking its transport to the cell surface.</text>
</comment>
<comment type="function">
    <text evidence="1">The gp120-gp41 heterodimer allows rapid transcytosis of the virus through CD4 negative cells such as simple epithelial monolayers of the intestinal, rectal and endocervical epithelial barriers. Both gp120 and gp41 specifically recognize glycosphingolipids galactosyl-ceramide (GalCer) or 3' sulfo-galactosyl-ceramide (GalS) present in the lipid rafts structures of epithelial cells. Binding to these alternative receptors allows the rapid transcytosis of the virus through the epithelial cells. This transcytotic vesicle-mediated transport of virions from the apical side to the basolateral side of the epithelial cells does not involve infection of the cells themselves (By similarity).</text>
</comment>
<comment type="subunit">
    <molecule>Surface protein gp120</molecule>
    <text evidence="1">The mature envelope protein (Env) consists of a homotrimer of non-covalently associated gp120-gp41 heterodimers. The resulting complex protrudes from the virus surface as a spike. Interacts with host CD4 and CCR5 (By similarity). Gp120 also interacts with the C-type lectins CD209/DC-SIGN and CLEC4M/DC-SIGNR (collectively referred to as DC-SIGN(R)).</text>
</comment>
<comment type="subunit">
    <molecule>Transmembrane protein gp41</molecule>
    <text evidence="1">The mature envelope protein (Env) consists of a homotrimer of non-covalently associated gp120-gp41 heterodimers. The resulting complex protrudes from the virus surface as a spike.</text>
</comment>
<comment type="subcellular location">
    <molecule>Transmembrane protein gp41</molecule>
    <subcellularLocation>
        <location evidence="1">Virion membrane</location>
        <topology evidence="1">Single-pass type I membrane protein</topology>
    </subcellularLocation>
    <subcellularLocation>
        <location evidence="1">Host cell membrane</location>
        <topology evidence="1">Single-pass type I membrane protein</topology>
    </subcellularLocation>
    <subcellularLocation>
        <location evidence="4">Host endosome membrane</location>
        <topology evidence="4">Single-pass type I membrane protein</topology>
    </subcellularLocation>
    <text evidence="1">It is probably concentrated at the site of budding and incorporated into the virions possibly by contacts between the cytoplasmic tail of Env and the N-terminus of Gag.</text>
</comment>
<comment type="subcellular location">
    <molecule>Surface protein gp120</molecule>
    <subcellularLocation>
        <location evidence="1">Virion membrane</location>
        <topology evidence="1">Peripheral membrane protein</topology>
    </subcellularLocation>
    <subcellularLocation>
        <location evidence="1">Host cell membrane</location>
        <topology evidence="1">Peripheral membrane protein</topology>
    </subcellularLocation>
    <subcellularLocation>
        <location evidence="4">Host endosome membrane</location>
        <topology evidence="4">Peripheral membrane protein</topology>
    </subcellularLocation>
    <text evidence="1">The surface protein is not anchored to the viral envelope, but associates with the extravirion surface through its binding to TM. It is probably concentrated at the site of budding and incorporated into the virions possibly by contacts between the cytoplasmic tail of Env and the N-terminus of Gag (By similarity).</text>
</comment>
<comment type="domain">
    <text evidence="1">Some of the most genetically diverse regions of the viral genome are present in Env. They are called variable regions 1 through 5 (V1 through V5) (By similarity).</text>
</comment>
<comment type="domain">
    <text evidence="1">The 17 amino acids long immunosuppressive region is present in many retroviral envelope proteins. Synthetic peptides derived from this relatively conserved sequence inhibit immune function in vitro and in vivo (By similarity).</text>
</comment>
<comment type="PTM">
    <text evidence="1">Specific enzymatic cleavages in vivo yield mature proteins. Envelope glycoproteins are synthesized as an inactive precursor that is heavily N-glycosylated and processed likely by host cell furin in the Golgi to yield the mature SU and TM proteins. The cleavage site between SU and TM requires the minimal sequence [KR]-X-[KR]-R (By similarity).</text>
</comment>
<comment type="PTM">
    <text evidence="1">Palmitoylation of the transmembrane protein and of Env polyprotein (prior to its proteolytic cleavage) is essential for their association with host cell membrane lipid rafts. Palmitoylation is therefore required for envelope trafficking to classical lipid rafts, but not for viral replication (By similarity).</text>
</comment>
<comment type="miscellaneous">
    <text>This is a macaque isolate.</text>
</comment>
<gene>
    <name type="primary">env</name>
</gene>
<reference key="1">
    <citation type="journal article" date="1987" name="Nature">
        <title>Sequence of simian immunodeficiency virus from macaque and its relationship to other human and simian retroviruses.</title>
        <authorList>
            <person name="Chakrabarti L."/>
            <person name="Guyader M."/>
            <person name="Alizon M."/>
            <person name="Daniel M.D."/>
            <person name="Desrosiers R.C."/>
            <person name="Tiollais P."/>
            <person name="Sonigo P."/>
        </authorList>
    </citation>
    <scope>NUCLEOTIDE SEQUENCE [GENOMIC DNA]</scope>
</reference>
<dbReference type="EMBL" id="Y00277">
    <property type="status" value="NOT_ANNOTATED_CDS"/>
    <property type="molecule type" value="Genomic_DNA"/>
</dbReference>
<dbReference type="PIR" id="H28887">
    <property type="entry name" value="VCLJG3"/>
</dbReference>
<dbReference type="GlyCosmos" id="P05885">
    <property type="glycosylation" value="26 sites, No reported glycans"/>
</dbReference>
<dbReference type="Proteomes" id="UP000007220">
    <property type="component" value="Segment"/>
</dbReference>
<dbReference type="GO" id="GO:0044175">
    <property type="term" value="C:host cell endosome membrane"/>
    <property type="evidence" value="ECO:0007669"/>
    <property type="project" value="UniProtKB-SubCell"/>
</dbReference>
<dbReference type="GO" id="GO:0020002">
    <property type="term" value="C:host cell plasma membrane"/>
    <property type="evidence" value="ECO:0007669"/>
    <property type="project" value="UniProtKB-SubCell"/>
</dbReference>
<dbReference type="GO" id="GO:0016020">
    <property type="term" value="C:membrane"/>
    <property type="evidence" value="ECO:0007669"/>
    <property type="project" value="UniProtKB-KW"/>
</dbReference>
<dbReference type="GO" id="GO:0019031">
    <property type="term" value="C:viral envelope"/>
    <property type="evidence" value="ECO:0007669"/>
    <property type="project" value="UniProtKB-KW"/>
</dbReference>
<dbReference type="GO" id="GO:0055036">
    <property type="term" value="C:virion membrane"/>
    <property type="evidence" value="ECO:0007669"/>
    <property type="project" value="UniProtKB-SubCell"/>
</dbReference>
<dbReference type="GO" id="GO:0005198">
    <property type="term" value="F:structural molecule activity"/>
    <property type="evidence" value="ECO:0007669"/>
    <property type="project" value="InterPro"/>
</dbReference>
<dbReference type="GO" id="GO:0039663">
    <property type="term" value="P:membrane fusion involved in viral entry into host cell"/>
    <property type="evidence" value="ECO:0007669"/>
    <property type="project" value="UniProtKB-KW"/>
</dbReference>
<dbReference type="GO" id="GO:0046718">
    <property type="term" value="P:symbiont entry into host cell"/>
    <property type="evidence" value="ECO:0007669"/>
    <property type="project" value="UniProtKB-KW"/>
</dbReference>
<dbReference type="GO" id="GO:0019062">
    <property type="term" value="P:virion attachment to host cell"/>
    <property type="evidence" value="ECO:0007669"/>
    <property type="project" value="UniProtKB-KW"/>
</dbReference>
<dbReference type="CDD" id="cd09909">
    <property type="entry name" value="HIV-1-like_HR1-HR2"/>
    <property type="match status" value="1"/>
</dbReference>
<dbReference type="Gene3D" id="1.10.287.210">
    <property type="match status" value="1"/>
</dbReference>
<dbReference type="Gene3D" id="2.170.40.20">
    <property type="entry name" value="Human immunodeficiency virus 1, Gp160, envelope glycoprotein"/>
    <property type="match status" value="2"/>
</dbReference>
<dbReference type="InterPro" id="IPR036377">
    <property type="entry name" value="Gp120_core_sf"/>
</dbReference>
<dbReference type="InterPro" id="IPR000328">
    <property type="entry name" value="GP41-like"/>
</dbReference>
<dbReference type="InterPro" id="IPR000777">
    <property type="entry name" value="HIV1_Gp120"/>
</dbReference>
<dbReference type="Pfam" id="PF00516">
    <property type="entry name" value="GP120"/>
    <property type="match status" value="1"/>
</dbReference>
<dbReference type="Pfam" id="PF00517">
    <property type="entry name" value="GP41"/>
    <property type="match status" value="1"/>
</dbReference>
<dbReference type="SUPFAM" id="SSF56502">
    <property type="entry name" value="gp120 core"/>
    <property type="match status" value="1"/>
</dbReference>
<dbReference type="SUPFAM" id="SSF58069">
    <property type="entry name" value="Virus ectodomain"/>
    <property type="match status" value="1"/>
</dbReference>
<sequence>MGCLGNQLLIAILLLSVYGIYCIQYVTVFYGVPAWRNATIPLFCATKNRDTWGTTQCLPDNDDYSELALNVTESFDAWENTVTEQAIEDVWQLFETSIKPCVKLSPLCITMRCNKSETDKWGLTKSSTTTASTTTTTTAKSVETRDIVNETSPCVVHDNCTGLEQEPMISCKFNMTGLKRDKKKEYNETWYSADLVCEQGNSTGNESRCYMNHCNTSVIQECCDKDYWDAIRCRYCAPPGYALLRCNDTNYSGFMPNCSKVVVSSCTRMMETQTSTWFRFNGTRAENRTYIYWHGRDNRTIISLNKHYNLTMKCRRPGNKTVLPVTIMSALVFHSQPVNERPKQAWCRFGGNWKEAIKEVKQTIVKHPRYTGTNNTDKINLTAPRGGDPEVTFMWTNCRGEFLYCKMNWFLNWVEDRSLTTQKPKERHKRNYVPCHIRQIINTWHKVGKNVYLPPREGDLTCNSTVTSLIANINWTDGNQTSITMSAEVAELYRLELGDYKLVEITPIGLAPTNVKRYTTGGTSRNKRGVFVLGFLGFLATAGSAMGAASLTVTAQSRTLLAGIVQQQQQLLDVVKRQQELLRLTVWGTKNLQTRVSAIEKYLKDQAQLNAWGCAFRQVCHTTVPWPNASLTPDWNNETWQEWERKVDFLEANITALLEEAQIQQEKNMYELQKLNSWDVFGNWFDLTSWIKYIQYGIYIIVGVILLRIVIYIVQMLARLRQGYRPVFSSPPSYFQXTHTQQDPALPTKEGKKGDGGGSGGNSSWPWQIEYIHFLIRQLIRLLTWLFSNCRTLLSRAYQILQPIFQRLSATLRRIREVLRLELTYLQYGWSYFQEAVQAAQRSATETLAGAWGELWEALQRGGRWILAIPRRIRQGLELTLL</sequence>
<name>ENV_SIVM1</name>
<keyword id="KW-0053">Apoptosis</keyword>
<keyword id="KW-0165">Cleavage on pair of basic residues</keyword>
<keyword id="KW-0175">Coiled coil</keyword>
<keyword id="KW-1015">Disulfide bond</keyword>
<keyword id="KW-1168">Fusion of virus membrane with host membrane</keyword>
<keyword id="KW-0325">Glycoprotein</keyword>
<keyword id="KW-1032">Host cell membrane</keyword>
<keyword id="KW-1039">Host endosome</keyword>
<keyword id="KW-1043">Host membrane</keyword>
<keyword id="KW-0945">Host-virus interaction</keyword>
<keyword id="KW-0449">Lipoprotein</keyword>
<keyword id="KW-0472">Membrane</keyword>
<keyword id="KW-0564">Palmitate</keyword>
<keyword id="KW-0732">Signal</keyword>
<keyword id="KW-0812">Transmembrane</keyword>
<keyword id="KW-1133">Transmembrane helix</keyword>
<keyword id="KW-1161">Viral attachment to host cell</keyword>
<keyword id="KW-0261">Viral envelope protein</keyword>
<keyword id="KW-1162">Viral penetration into host cytoplasm</keyword>
<keyword id="KW-0946">Virion</keyword>
<keyword id="KW-1160">Virus entry into host cell</keyword>
<evidence type="ECO:0000250" key="1"/>
<evidence type="ECO:0000255" key="2"/>
<evidence type="ECO:0000256" key="3">
    <source>
        <dbReference type="SAM" id="MobiDB-lite"/>
    </source>
</evidence>
<evidence type="ECO:0000305" key="4"/>